<evidence type="ECO:0000255" key="1">
    <source>
        <dbReference type="HAMAP-Rule" id="MF_00300"/>
    </source>
</evidence>
<feature type="chain" id="PRO_1000059315" description="Chorismate synthase">
    <location>
        <begin position="1"/>
        <end position="361"/>
    </location>
</feature>
<feature type="binding site" evidence="1">
    <location>
        <position position="48"/>
    </location>
    <ligand>
        <name>NADP(+)</name>
        <dbReference type="ChEBI" id="CHEBI:58349"/>
    </ligand>
</feature>
<feature type="binding site" evidence="1">
    <location>
        <position position="54"/>
    </location>
    <ligand>
        <name>NADP(+)</name>
        <dbReference type="ChEBI" id="CHEBI:58349"/>
    </ligand>
</feature>
<feature type="binding site" evidence="1">
    <location>
        <begin position="125"/>
        <end position="127"/>
    </location>
    <ligand>
        <name>FMN</name>
        <dbReference type="ChEBI" id="CHEBI:58210"/>
    </ligand>
</feature>
<feature type="binding site" evidence="1">
    <location>
        <begin position="238"/>
        <end position="239"/>
    </location>
    <ligand>
        <name>FMN</name>
        <dbReference type="ChEBI" id="CHEBI:58210"/>
    </ligand>
</feature>
<feature type="binding site" evidence="1">
    <location>
        <position position="278"/>
    </location>
    <ligand>
        <name>FMN</name>
        <dbReference type="ChEBI" id="CHEBI:58210"/>
    </ligand>
</feature>
<feature type="binding site" evidence="1">
    <location>
        <begin position="293"/>
        <end position="297"/>
    </location>
    <ligand>
        <name>FMN</name>
        <dbReference type="ChEBI" id="CHEBI:58210"/>
    </ligand>
</feature>
<feature type="binding site" evidence="1">
    <location>
        <position position="319"/>
    </location>
    <ligand>
        <name>FMN</name>
        <dbReference type="ChEBI" id="CHEBI:58210"/>
    </ligand>
</feature>
<proteinExistence type="inferred from homology"/>
<dbReference type="EC" id="4.2.3.5" evidence="1"/>
<dbReference type="EMBL" id="CP000720">
    <property type="protein sequence ID" value="ABS48475.1"/>
    <property type="molecule type" value="Genomic_DNA"/>
</dbReference>
<dbReference type="RefSeq" id="WP_002209711.1">
    <property type="nucleotide sequence ID" value="NC_009708.1"/>
</dbReference>
<dbReference type="SMR" id="A7FGK6"/>
<dbReference type="GeneID" id="57975938"/>
<dbReference type="KEGG" id="ypi:YpsIP31758_1405"/>
<dbReference type="HOGENOM" id="CLU_034547_0_2_6"/>
<dbReference type="UniPathway" id="UPA00053">
    <property type="reaction ID" value="UER00090"/>
</dbReference>
<dbReference type="Proteomes" id="UP000002412">
    <property type="component" value="Chromosome"/>
</dbReference>
<dbReference type="GO" id="GO:0005829">
    <property type="term" value="C:cytosol"/>
    <property type="evidence" value="ECO:0007669"/>
    <property type="project" value="TreeGrafter"/>
</dbReference>
<dbReference type="GO" id="GO:0004107">
    <property type="term" value="F:chorismate synthase activity"/>
    <property type="evidence" value="ECO:0007669"/>
    <property type="project" value="UniProtKB-UniRule"/>
</dbReference>
<dbReference type="GO" id="GO:0010181">
    <property type="term" value="F:FMN binding"/>
    <property type="evidence" value="ECO:0007669"/>
    <property type="project" value="TreeGrafter"/>
</dbReference>
<dbReference type="GO" id="GO:0008652">
    <property type="term" value="P:amino acid biosynthetic process"/>
    <property type="evidence" value="ECO:0007669"/>
    <property type="project" value="UniProtKB-KW"/>
</dbReference>
<dbReference type="GO" id="GO:0009073">
    <property type="term" value="P:aromatic amino acid family biosynthetic process"/>
    <property type="evidence" value="ECO:0007669"/>
    <property type="project" value="UniProtKB-KW"/>
</dbReference>
<dbReference type="GO" id="GO:0009423">
    <property type="term" value="P:chorismate biosynthetic process"/>
    <property type="evidence" value="ECO:0007669"/>
    <property type="project" value="UniProtKB-UniRule"/>
</dbReference>
<dbReference type="CDD" id="cd07304">
    <property type="entry name" value="Chorismate_synthase"/>
    <property type="match status" value="1"/>
</dbReference>
<dbReference type="FunFam" id="3.60.150.10:FF:000001">
    <property type="entry name" value="Chorismate synthase"/>
    <property type="match status" value="1"/>
</dbReference>
<dbReference type="Gene3D" id="3.60.150.10">
    <property type="entry name" value="Chorismate synthase AroC"/>
    <property type="match status" value="1"/>
</dbReference>
<dbReference type="HAMAP" id="MF_00300">
    <property type="entry name" value="Chorismate_synth"/>
    <property type="match status" value="1"/>
</dbReference>
<dbReference type="InterPro" id="IPR000453">
    <property type="entry name" value="Chorismate_synth"/>
</dbReference>
<dbReference type="InterPro" id="IPR035904">
    <property type="entry name" value="Chorismate_synth_AroC_sf"/>
</dbReference>
<dbReference type="InterPro" id="IPR020541">
    <property type="entry name" value="Chorismate_synthase_CS"/>
</dbReference>
<dbReference type="NCBIfam" id="TIGR00033">
    <property type="entry name" value="aroC"/>
    <property type="match status" value="1"/>
</dbReference>
<dbReference type="NCBIfam" id="NF003793">
    <property type="entry name" value="PRK05382.1"/>
    <property type="match status" value="1"/>
</dbReference>
<dbReference type="PANTHER" id="PTHR21085">
    <property type="entry name" value="CHORISMATE SYNTHASE"/>
    <property type="match status" value="1"/>
</dbReference>
<dbReference type="PANTHER" id="PTHR21085:SF0">
    <property type="entry name" value="CHORISMATE SYNTHASE"/>
    <property type="match status" value="1"/>
</dbReference>
<dbReference type="Pfam" id="PF01264">
    <property type="entry name" value="Chorismate_synt"/>
    <property type="match status" value="1"/>
</dbReference>
<dbReference type="PIRSF" id="PIRSF001456">
    <property type="entry name" value="Chorismate_synth"/>
    <property type="match status" value="1"/>
</dbReference>
<dbReference type="SUPFAM" id="SSF103263">
    <property type="entry name" value="Chorismate synthase, AroC"/>
    <property type="match status" value="1"/>
</dbReference>
<dbReference type="PROSITE" id="PS00787">
    <property type="entry name" value="CHORISMATE_SYNTHASE_1"/>
    <property type="match status" value="1"/>
</dbReference>
<dbReference type="PROSITE" id="PS00788">
    <property type="entry name" value="CHORISMATE_SYNTHASE_2"/>
    <property type="match status" value="1"/>
</dbReference>
<dbReference type="PROSITE" id="PS00789">
    <property type="entry name" value="CHORISMATE_SYNTHASE_3"/>
    <property type="match status" value="1"/>
</dbReference>
<accession>A7FGK6</accession>
<name>AROC_YERP3</name>
<organism>
    <name type="scientific">Yersinia pseudotuberculosis serotype O:1b (strain IP 31758)</name>
    <dbReference type="NCBI Taxonomy" id="349747"/>
    <lineage>
        <taxon>Bacteria</taxon>
        <taxon>Pseudomonadati</taxon>
        <taxon>Pseudomonadota</taxon>
        <taxon>Gammaproteobacteria</taxon>
        <taxon>Enterobacterales</taxon>
        <taxon>Yersiniaceae</taxon>
        <taxon>Yersinia</taxon>
    </lineage>
</organism>
<keyword id="KW-0028">Amino-acid biosynthesis</keyword>
<keyword id="KW-0057">Aromatic amino acid biosynthesis</keyword>
<keyword id="KW-0274">FAD</keyword>
<keyword id="KW-0285">Flavoprotein</keyword>
<keyword id="KW-0288">FMN</keyword>
<keyword id="KW-0456">Lyase</keyword>
<keyword id="KW-0521">NADP</keyword>
<gene>
    <name evidence="1" type="primary">aroC</name>
    <name type="ordered locus">YpsIP31758_1405</name>
</gene>
<protein>
    <recommendedName>
        <fullName evidence="1">Chorismate synthase</fullName>
        <shortName evidence="1">CS</shortName>
        <ecNumber evidence="1">4.2.3.5</ecNumber>
    </recommendedName>
    <alternativeName>
        <fullName evidence="1">5-enolpyruvylshikimate-3-phosphate phospholyase</fullName>
    </alternativeName>
</protein>
<comment type="function">
    <text evidence="1">Catalyzes the anti-1,4-elimination of the C-3 phosphate and the C-6 proR hydrogen from 5-enolpyruvylshikimate-3-phosphate (EPSP) to yield chorismate, which is the branch point compound that serves as the starting substrate for the three terminal pathways of aromatic amino acid biosynthesis. This reaction introduces a second double bond into the aromatic ring system.</text>
</comment>
<comment type="catalytic activity">
    <reaction evidence="1">
        <text>5-O-(1-carboxyvinyl)-3-phosphoshikimate = chorismate + phosphate</text>
        <dbReference type="Rhea" id="RHEA:21020"/>
        <dbReference type="ChEBI" id="CHEBI:29748"/>
        <dbReference type="ChEBI" id="CHEBI:43474"/>
        <dbReference type="ChEBI" id="CHEBI:57701"/>
        <dbReference type="EC" id="4.2.3.5"/>
    </reaction>
</comment>
<comment type="cofactor">
    <cofactor evidence="1">
        <name>FMNH2</name>
        <dbReference type="ChEBI" id="CHEBI:57618"/>
    </cofactor>
    <text evidence="1">Reduced FMN (FMNH(2)).</text>
</comment>
<comment type="pathway">
    <text evidence="1">Metabolic intermediate biosynthesis; chorismate biosynthesis; chorismate from D-erythrose 4-phosphate and phosphoenolpyruvate: step 7/7.</text>
</comment>
<comment type="subunit">
    <text evidence="1">Homotetramer.</text>
</comment>
<comment type="similarity">
    <text evidence="1">Belongs to the chorismate synthase family.</text>
</comment>
<sequence>MAGNSIGQFFRVTTFGESHGIALGCIIDGVPPGIPITEADIQLDLDRRRPGTSRYTTQRRELDQVRILSGVFEGVTTGTSIGLMIENTDQRSQDYSAIKDVFRPGHADYTYEQKYGVRDYRGGGRSSARETAMRVAAGAIAKKYLAQKFGVQVRGYLAQMGDVSCDLLDWDLVEQNPFFCPDASKLEPLDALMRELKKAGDSIGAKITVVAENVPVGLGEPVFDRLDADLAHALMSINAVKGVEIGDGFAVVTKRGSENRDEITPQGFQSNHAGGILGGISSGQPVVAHIALKPTSSIMVPGQTINRQGEAVEMVTRGRHDPCVGIRAVPIAEAMMAIVLMDHLLRQRAQCGDVASDVPRW</sequence>
<reference key="1">
    <citation type="journal article" date="2007" name="PLoS Genet.">
        <title>The complete genome sequence of Yersinia pseudotuberculosis IP31758, the causative agent of Far East scarlet-like fever.</title>
        <authorList>
            <person name="Eppinger M."/>
            <person name="Rosovitz M.J."/>
            <person name="Fricke W.F."/>
            <person name="Rasko D.A."/>
            <person name="Kokorina G."/>
            <person name="Fayolle C."/>
            <person name="Lindler L.E."/>
            <person name="Carniel E."/>
            <person name="Ravel J."/>
        </authorList>
    </citation>
    <scope>NUCLEOTIDE SEQUENCE [LARGE SCALE GENOMIC DNA]</scope>
    <source>
        <strain>IP 31758</strain>
    </source>
</reference>